<keyword id="KW-1003">Cell membrane</keyword>
<keyword id="KW-1015">Disulfide bond</keyword>
<keyword id="KW-0297">G-protein coupled receptor</keyword>
<keyword id="KW-0472">Membrane</keyword>
<keyword id="KW-0552">Olfaction</keyword>
<keyword id="KW-0675">Receptor</keyword>
<keyword id="KW-1185">Reference proteome</keyword>
<keyword id="KW-0716">Sensory transduction</keyword>
<keyword id="KW-0807">Transducer</keyword>
<keyword id="KW-0812">Transmembrane</keyword>
<keyword id="KW-1133">Transmembrane helix</keyword>
<accession>Q60893</accession>
<accession>B2RQX1</accession>
<accession>Q7TRE7</accession>
<accession>Q9ERU6</accession>
<protein>
    <recommendedName>
        <fullName evidence="4">Olfactory receptor 8A1</fullName>
    </recommendedName>
    <alternativeName>
        <fullName evidence="3">Odorant receptor M71</fullName>
    </alternativeName>
    <alternativeName>
        <fullName evidence="5">Olfactory receptor 151</fullName>
    </alternativeName>
    <alternativeName>
        <fullName evidence="5">Olfactory receptor 171-2</fullName>
    </alternativeName>
    <alternativeName>
        <fullName>Olfactory receptor 7H</fullName>
    </alternativeName>
</protein>
<reference key="1">
    <citation type="submission" date="2000-06" db="EMBL/GenBank/DDBJ databases">
        <title>An Olfr7 odorant receptor, M71.</title>
        <authorList>
            <person name="Feinstein P."/>
            <person name="Mombaerts P."/>
        </authorList>
    </citation>
    <scope>NUCLEOTIDE SEQUENCE [GENOMIC DNA]</scope>
    <source>
        <strain>129/SvJ</strain>
    </source>
</reference>
<reference key="2">
    <citation type="journal article" date="2002" name="Nat. Neurosci.">
        <title>The olfactory receptor gene superfamily of the mouse.</title>
        <authorList>
            <person name="Zhang X."/>
            <person name="Firestein S."/>
        </authorList>
    </citation>
    <scope>NUCLEOTIDE SEQUENCE [GENOMIC DNA]</scope>
</reference>
<reference key="3">
    <citation type="journal article" date="2002" name="Hum. Mol. Genet.">
        <title>Different evolutionary processes shaped the mouse and human olfactory receptor gene families.</title>
        <authorList>
            <person name="Young J.M."/>
            <person name="Friedman C."/>
            <person name="Williams E.M."/>
            <person name="Ross J.A."/>
            <person name="Tonnes-Priddy L."/>
            <person name="Trask B.J."/>
        </authorList>
    </citation>
    <scope>NUCLEOTIDE SEQUENCE [GENOMIC DNA]</scope>
</reference>
<reference key="4">
    <citation type="journal article" date="2002" name="Hum. Mol. Genet.">
        <authorList>
            <person name="Young J.M."/>
            <person name="Friedman C."/>
            <person name="Williams E.M."/>
            <person name="Ross J.A."/>
            <person name="Tonnes-Priddy L."/>
            <person name="Trask B.J."/>
        </authorList>
    </citation>
    <scope>ERRATUM OF PUBMED:11875048</scope>
</reference>
<reference key="5">
    <citation type="journal article" date="2003" name="Genome Biol.">
        <title>Odorant receptor expressed sequence tags demonstrate olfactory expression of over 400 genes, extensive alternate splicing and unequal expression levels.</title>
        <authorList>
            <person name="Young J.M."/>
            <person name="Shykind B.M."/>
            <person name="Lane R.P."/>
            <person name="Tonnes-Priddy L."/>
            <person name="Ross J.A."/>
            <person name="Walker M."/>
            <person name="Williams E.M."/>
            <person name="Trask B.J."/>
        </authorList>
    </citation>
    <scope>NUCLEOTIDE SEQUENCE [GENOMIC DNA]</scope>
</reference>
<reference key="6">
    <citation type="journal article" date="2004" name="Genome Res.">
        <title>The status, quality, and expansion of the NIH full-length cDNA project: the Mammalian Gene Collection (MGC).</title>
        <authorList>
            <consortium name="The MGC Project Team"/>
        </authorList>
    </citation>
    <scope>NUCLEOTIDE SEQUENCE [LARGE SCALE MRNA]</scope>
    <source>
        <tissue>Brain</tissue>
    </source>
</reference>
<reference key="7">
    <citation type="journal article" date="1996" name="Proc. Natl. Acad. Sci. U.S.A.">
        <title>The chromosomal distribution of mouse odorant receptor genes.</title>
        <authorList>
            <person name="Sullivan S.L."/>
            <person name="Adamson M.C."/>
            <person name="Ressler K.J."/>
            <person name="Kozak C.A."/>
            <person name="Buck L.B."/>
        </authorList>
    </citation>
    <scope>NUCLEOTIDE SEQUENCE [GENOMIC DNA] OF 128-238</scope>
    <source>
        <strain>C57BL/6J</strain>
    </source>
</reference>
<feature type="chain" id="PRO_0000150828" description="Olfactory receptor 8A1">
    <location>
        <begin position="1"/>
        <end position="309"/>
    </location>
</feature>
<feature type="topological domain" description="Extracellular" evidence="1">
    <location>
        <begin position="1"/>
        <end position="28"/>
    </location>
</feature>
<feature type="transmembrane region" description="Helical; Name=1" evidence="1">
    <location>
        <begin position="29"/>
        <end position="49"/>
    </location>
</feature>
<feature type="topological domain" description="Cytoplasmic" evidence="1">
    <location>
        <begin position="50"/>
        <end position="56"/>
    </location>
</feature>
<feature type="transmembrane region" description="Helical; Name=2" evidence="1">
    <location>
        <begin position="57"/>
        <end position="77"/>
    </location>
</feature>
<feature type="topological domain" description="Extracellular" evidence="1">
    <location>
        <begin position="78"/>
        <end position="90"/>
    </location>
</feature>
<feature type="transmembrane region" description="Helical; Name=3" evidence="1">
    <location>
        <begin position="91"/>
        <end position="111"/>
    </location>
</feature>
<feature type="topological domain" description="Cytoplasmic" evidence="1">
    <location>
        <begin position="112"/>
        <end position="133"/>
    </location>
</feature>
<feature type="transmembrane region" description="Helical; Name=4" evidence="1">
    <location>
        <begin position="134"/>
        <end position="154"/>
    </location>
</feature>
<feature type="topological domain" description="Extracellular" evidence="1">
    <location>
        <begin position="155"/>
        <end position="195"/>
    </location>
</feature>
<feature type="transmembrane region" description="Helical; Name=5" evidence="1">
    <location>
        <begin position="196"/>
        <end position="216"/>
    </location>
</feature>
<feature type="topological domain" description="Cytoplasmic" evidence="1">
    <location>
        <begin position="217"/>
        <end position="238"/>
    </location>
</feature>
<feature type="transmembrane region" description="Helical; Name=6" evidence="1">
    <location>
        <begin position="239"/>
        <end position="259"/>
    </location>
</feature>
<feature type="topological domain" description="Extracellular" evidence="1">
    <location>
        <begin position="260"/>
        <end position="270"/>
    </location>
</feature>
<feature type="transmembrane region" description="Helical; Name=7" evidence="1">
    <location>
        <begin position="271"/>
        <end position="291"/>
    </location>
</feature>
<feature type="topological domain" description="Cytoplasmic" evidence="1">
    <location>
        <begin position="292"/>
        <end position="309"/>
    </location>
</feature>
<feature type="disulfide bond" evidence="2">
    <location>
        <begin position="97"/>
        <end position="188"/>
    </location>
</feature>
<feature type="sequence conflict" description="In Ref. 7; AAC52405." evidence="4" ref="7">
    <original>E</original>
    <variation>G</variation>
    <location>
        <position position="231"/>
    </location>
</feature>
<feature type="sequence conflict" description="In Ref. 5; AAP71352." evidence="4" ref="5">
    <original>F</original>
    <variation>L</variation>
    <location>
        <position position="284"/>
    </location>
</feature>
<proteinExistence type="evidence at transcript level"/>
<name>OR8A1_MOUSE</name>
<dbReference type="EMBL" id="AF281061">
    <property type="protein sequence ID" value="AAG29379.1"/>
    <property type="molecule type" value="Genomic_DNA"/>
</dbReference>
<dbReference type="EMBL" id="AY073205">
    <property type="protein sequence ID" value="AAL60868.1"/>
    <property type="molecule type" value="Genomic_DNA"/>
</dbReference>
<dbReference type="EMBL" id="AY318055">
    <property type="protein sequence ID" value="AAP71352.1"/>
    <property type="molecule type" value="Genomic_DNA"/>
</dbReference>
<dbReference type="EMBL" id="BC138117">
    <property type="protein sequence ID" value="AAI38118.1"/>
    <property type="molecule type" value="mRNA"/>
</dbReference>
<dbReference type="EMBL" id="BC138118">
    <property type="protein sequence ID" value="AAI38119.1"/>
    <property type="molecule type" value="mRNA"/>
</dbReference>
<dbReference type="EMBL" id="U28782">
    <property type="protein sequence ID" value="AAC52405.1"/>
    <property type="molecule type" value="Genomic_DNA"/>
</dbReference>
<dbReference type="RefSeq" id="NP_997547.1">
    <property type="nucleotide sequence ID" value="NM_207664.2"/>
</dbReference>
<dbReference type="SMR" id="Q60893"/>
<dbReference type="CORUM" id="Q60893"/>
<dbReference type="FunCoup" id="Q60893">
    <property type="interactions" value="1228"/>
</dbReference>
<dbReference type="STRING" id="10090.ENSMUSP00000148600"/>
<dbReference type="PaxDb" id="10090-ENSMUSP00000100468"/>
<dbReference type="DNASU" id="406176"/>
<dbReference type="GeneID" id="406176"/>
<dbReference type="KEGG" id="mmu:406176"/>
<dbReference type="UCSC" id="uc009ovk.2">
    <property type="organism name" value="mouse"/>
</dbReference>
<dbReference type="AGR" id="MGI:2661338"/>
<dbReference type="CTD" id="390275"/>
<dbReference type="MGI" id="MGI:2661338">
    <property type="gene designation" value="Or8a1"/>
</dbReference>
<dbReference type="eggNOG" id="ENOG502T9KS">
    <property type="taxonomic scope" value="Eukaryota"/>
</dbReference>
<dbReference type="InParanoid" id="Q60893"/>
<dbReference type="PhylomeDB" id="Q60893"/>
<dbReference type="BioGRID-ORCS" id="406176">
    <property type="hits" value="2 hits in 13 CRISPR screens"/>
</dbReference>
<dbReference type="PRO" id="PR:Q60893"/>
<dbReference type="Proteomes" id="UP000000589">
    <property type="component" value="Unplaced"/>
</dbReference>
<dbReference type="RNAct" id="Q60893">
    <property type="molecule type" value="protein"/>
</dbReference>
<dbReference type="GO" id="GO:0005789">
    <property type="term" value="C:endoplasmic reticulum membrane"/>
    <property type="evidence" value="ECO:0000304"/>
    <property type="project" value="Reactome"/>
</dbReference>
<dbReference type="GO" id="GO:0016020">
    <property type="term" value="C:membrane"/>
    <property type="evidence" value="ECO:0000247"/>
    <property type="project" value="MGI"/>
</dbReference>
<dbReference type="GO" id="GO:0005886">
    <property type="term" value="C:plasma membrane"/>
    <property type="evidence" value="ECO:0000304"/>
    <property type="project" value="Reactome"/>
</dbReference>
<dbReference type="GO" id="GO:0004930">
    <property type="term" value="F:G protein-coupled receptor activity"/>
    <property type="evidence" value="ECO:0007669"/>
    <property type="project" value="UniProtKB-KW"/>
</dbReference>
<dbReference type="GO" id="GO:0004984">
    <property type="term" value="F:olfactory receptor activity"/>
    <property type="evidence" value="ECO:0000247"/>
    <property type="project" value="MGI"/>
</dbReference>
<dbReference type="GO" id="GO:0007186">
    <property type="term" value="P:G protein-coupled receptor signaling pathway"/>
    <property type="evidence" value="ECO:0000247"/>
    <property type="project" value="MGI"/>
</dbReference>
<dbReference type="GO" id="GO:0007608">
    <property type="term" value="P:sensory perception of smell"/>
    <property type="evidence" value="ECO:0000247"/>
    <property type="project" value="MGI"/>
</dbReference>
<dbReference type="FunFam" id="1.20.1070.10:FF:000004">
    <property type="entry name" value="Olfactory receptor"/>
    <property type="match status" value="1"/>
</dbReference>
<dbReference type="Gene3D" id="1.20.1070.10">
    <property type="entry name" value="Rhodopsin 7-helix transmembrane proteins"/>
    <property type="match status" value="1"/>
</dbReference>
<dbReference type="InterPro" id="IPR000276">
    <property type="entry name" value="GPCR_Rhodpsn"/>
</dbReference>
<dbReference type="InterPro" id="IPR017452">
    <property type="entry name" value="GPCR_Rhodpsn_7TM"/>
</dbReference>
<dbReference type="InterPro" id="IPR000725">
    <property type="entry name" value="Olfact_rcpt"/>
</dbReference>
<dbReference type="PANTHER" id="PTHR48018">
    <property type="entry name" value="OLFACTORY RECEPTOR"/>
    <property type="match status" value="1"/>
</dbReference>
<dbReference type="Pfam" id="PF13853">
    <property type="entry name" value="7tm_4"/>
    <property type="match status" value="1"/>
</dbReference>
<dbReference type="PRINTS" id="PR00237">
    <property type="entry name" value="GPCRRHODOPSN"/>
</dbReference>
<dbReference type="PRINTS" id="PR00245">
    <property type="entry name" value="OLFACTORYR"/>
</dbReference>
<dbReference type="SUPFAM" id="SSF81321">
    <property type="entry name" value="Family A G protein-coupled receptor-like"/>
    <property type="match status" value="1"/>
</dbReference>
<dbReference type="PROSITE" id="PS00237">
    <property type="entry name" value="G_PROTEIN_RECEP_F1_1"/>
    <property type="match status" value="1"/>
</dbReference>
<dbReference type="PROSITE" id="PS50262">
    <property type="entry name" value="G_PROTEIN_RECEP_F1_2"/>
    <property type="match status" value="1"/>
</dbReference>
<comment type="function">
    <text evidence="4">Odorant receptor.</text>
</comment>
<comment type="subcellular location">
    <subcellularLocation>
        <location evidence="4">Cell membrane</location>
        <topology evidence="1">Multi-pass membrane protein</topology>
    </subcellularLocation>
</comment>
<comment type="similarity">
    <text evidence="2">Belongs to the G-protein coupled receptor 1 family.</text>
</comment>
<evidence type="ECO:0000255" key="1"/>
<evidence type="ECO:0000255" key="2">
    <source>
        <dbReference type="PROSITE-ProRule" id="PRU00521"/>
    </source>
</evidence>
<evidence type="ECO:0000303" key="3">
    <source ref="1"/>
</evidence>
<evidence type="ECO:0000305" key="4"/>
<evidence type="ECO:0000312" key="5">
    <source>
        <dbReference type="MGI" id="MGI:2661338"/>
    </source>
</evidence>
<sequence>MTAENQSTVTEFILGGLTNRPELQLPLFLLFLGIYVVTMVGNLGMITLIGLNSQLHTPMYFFLSNLSLVDLCYSSVITPKMLINFVSQRNLISYVGCMSQLYFFLVFVIAECYMLTVMAYDRYVAICQPLLYNIIMSPALCSLLVAFVYAVGLIGSAIETGLMLKLNYCEDLISHYFCDILPLMKLSCSSTYDVEMAVFFLAGFDIIVTSLTVLISYAFILSSILRISSNEGRSKAFSTCSSHFAAVGLFYGSTAFMYLKPSTASSLAQENVASVFYTTVIPMFNPLIYSLRNKEVKTALDKTLRRKVF</sequence>
<organism>
    <name type="scientific">Mus musculus</name>
    <name type="common">Mouse</name>
    <dbReference type="NCBI Taxonomy" id="10090"/>
    <lineage>
        <taxon>Eukaryota</taxon>
        <taxon>Metazoa</taxon>
        <taxon>Chordata</taxon>
        <taxon>Craniata</taxon>
        <taxon>Vertebrata</taxon>
        <taxon>Euteleostomi</taxon>
        <taxon>Mammalia</taxon>
        <taxon>Eutheria</taxon>
        <taxon>Euarchontoglires</taxon>
        <taxon>Glires</taxon>
        <taxon>Rodentia</taxon>
        <taxon>Myomorpha</taxon>
        <taxon>Muroidea</taxon>
        <taxon>Muridae</taxon>
        <taxon>Murinae</taxon>
        <taxon>Mus</taxon>
        <taxon>Mus</taxon>
    </lineage>
</organism>
<gene>
    <name evidence="5" type="primary">Or8a1</name>
    <name evidence="5" type="synonym">Mor171-2</name>
    <name evidence="5" type="synonym">Olfr151</name>
    <name evidence="3" type="synonym">Olfr7</name>
</gene>